<feature type="initiator methionine" description="Removed" evidence="6">
    <location>
        <position position="1"/>
    </location>
</feature>
<feature type="chain" id="PRO_0000219219" description="CD63 antigen">
    <location>
        <begin position="2"/>
        <end position="238"/>
    </location>
</feature>
<feature type="topological domain" description="Cytoplasmic" evidence="4">
    <location>
        <begin position="2"/>
        <end position="11"/>
    </location>
</feature>
<feature type="transmembrane region" description="Helical" evidence="4">
    <location>
        <begin position="12"/>
        <end position="32"/>
    </location>
</feature>
<feature type="topological domain" description="Extracellular" evidence="4">
    <location>
        <begin position="33"/>
        <end position="51"/>
    </location>
</feature>
<feature type="transmembrane region" description="Helical" evidence="4">
    <location>
        <begin position="52"/>
        <end position="72"/>
    </location>
</feature>
<feature type="topological domain" description="Cytoplasmic" evidence="4">
    <location>
        <begin position="73"/>
        <end position="81"/>
    </location>
</feature>
<feature type="transmembrane region" description="Helical" evidence="4">
    <location>
        <begin position="82"/>
        <end position="102"/>
    </location>
</feature>
<feature type="topological domain" description="Extracellular" evidence="4">
    <location>
        <begin position="103"/>
        <end position="203"/>
    </location>
</feature>
<feature type="transmembrane region" description="Helical" evidence="4">
    <location>
        <begin position="204"/>
        <end position="224"/>
    </location>
</feature>
<feature type="topological domain" description="Cytoplasmic" evidence="4">
    <location>
        <begin position="225"/>
        <end position="238"/>
    </location>
</feature>
<feature type="short sequence motif" description="Lysosomal targeting motif" evidence="3">
    <location>
        <begin position="234"/>
        <end position="238"/>
    </location>
</feature>
<feature type="glycosylation site" description="N-linked (GlcNAc...) asparagine" evidence="4">
    <location>
        <position position="130"/>
    </location>
</feature>
<feature type="glycosylation site" description="N-linked (GlcNAc...) asparagine" evidence="4">
    <location>
        <position position="150"/>
    </location>
</feature>
<feature type="glycosylation site" description="N-linked (GlcNAc...) asparagine" evidence="4">
    <location>
        <position position="172"/>
    </location>
</feature>
<reference key="1">
    <citation type="journal article" date="1992" name="J. Immunol.">
        <title>The rat mast cell antigen AD1 (homologue to human CD63 or melanoma antigen ME491) is expressed in other cells in culture.</title>
        <authorList>
            <person name="Nishikata H."/>
            <person name="Oliver C."/>
            <person name="Mergenhagen S.E."/>
            <person name="Siraganian R.P."/>
        </authorList>
    </citation>
    <scope>NUCLEOTIDE SEQUENCE [MRNA]</scope>
    <scope>SUBCELLULAR LOCATION</scope>
    <scope>TISSUE SPECIFICITY</scope>
</reference>
<reference key="2">
    <citation type="journal article" date="2004" name="Genome Res.">
        <title>The status, quality, and expansion of the NIH full-length cDNA project: the Mammalian Gene Collection (MGC).</title>
        <authorList>
            <consortium name="The MGC Project Team"/>
        </authorList>
    </citation>
    <scope>NUCLEOTIDE SEQUENCE [LARGE SCALE MRNA]</scope>
    <source>
        <tissue>Pituitary</tissue>
    </source>
</reference>
<reference key="3">
    <citation type="journal article" date="1991" name="J. Biol. Chem.">
        <title>A cell surface glycoprotein of rat basophilic leukemia cells close to the high affinity IgE receptor (Fc epsilon RI). Similarity to human melanoma differentiation antigen ME491.</title>
        <authorList>
            <person name="Kitani S."/>
            <person name="Berenstein E."/>
            <person name="Mergenhagen S.E."/>
            <person name="Tempst P."/>
            <person name="Siraganian R.P."/>
        </authorList>
    </citation>
    <scope>PROTEIN SEQUENCE OF 2-44</scope>
    <scope>SUBCELLULAR LOCATION</scope>
</reference>
<reference key="4">
    <citation type="submission" date="2007-09" db="UniProtKB">
        <authorList>
            <person name="Lubec G."/>
            <person name="Kang S.U."/>
            <person name="Lubec S."/>
        </authorList>
    </citation>
    <scope>PROTEIN SEQUENCE OF 183-200</scope>
    <scope>IDENTIFICATION BY MASS SPECTROMETRY</scope>
    <source>
        <strain>Sprague-Dawley</strain>
        <tissue>Brain</tissue>
    </source>
</reference>
<proteinExistence type="evidence at protein level"/>
<name>CD63_RAT</name>
<sequence length="238" mass="25699">MAVEGGMKCVKFLLYVLLLAFCACAVGLIAIGVAVQVVLKQAITHETTAGSLLPVVIIAVGAFLFLVAFVGCCGACKENYCLMITFAIFLSLIMLVEVAVAIAGYVFRDQVKSEFSKSFQKQMQNYLTDNKTATILDKLQKENKCCGASNYTDWERIPGMAKDRVPDSCCINITVGCGNDFKESTIHTQGCVETIAAWLRKNVLLVAGAALGIAFVEVLGIIFSCCLVKSIRSGYEVM</sequence>
<protein>
    <recommendedName>
        <fullName>CD63 antigen</fullName>
    </recommendedName>
    <alternativeName>
        <fullName>Mast cell antigen AD1</fullName>
    </alternativeName>
    <cdAntigenName>CD63</cdAntigenName>
</protein>
<organism>
    <name type="scientific">Rattus norvegicus</name>
    <name type="common">Rat</name>
    <dbReference type="NCBI Taxonomy" id="10116"/>
    <lineage>
        <taxon>Eukaryota</taxon>
        <taxon>Metazoa</taxon>
        <taxon>Chordata</taxon>
        <taxon>Craniata</taxon>
        <taxon>Vertebrata</taxon>
        <taxon>Euteleostomi</taxon>
        <taxon>Mammalia</taxon>
        <taxon>Eutheria</taxon>
        <taxon>Euarchontoglires</taxon>
        <taxon>Glires</taxon>
        <taxon>Rodentia</taxon>
        <taxon>Myomorpha</taxon>
        <taxon>Muroidea</taxon>
        <taxon>Muridae</taxon>
        <taxon>Murinae</taxon>
        <taxon>Rattus</taxon>
    </lineage>
</organism>
<accession>P28648</accession>
<gene>
    <name type="primary">Cd63</name>
</gene>
<evidence type="ECO:0000250" key="1"/>
<evidence type="ECO:0000250" key="2">
    <source>
        <dbReference type="UniProtKB" id="P08962"/>
    </source>
</evidence>
<evidence type="ECO:0000250" key="3">
    <source>
        <dbReference type="UniProtKB" id="P41731"/>
    </source>
</evidence>
<evidence type="ECO:0000255" key="4"/>
<evidence type="ECO:0000269" key="5">
    <source>
    </source>
</evidence>
<evidence type="ECO:0000269" key="6">
    <source>
    </source>
</evidence>
<evidence type="ECO:0000305" key="7"/>
<keyword id="KW-1003">Cell membrane</keyword>
<keyword id="KW-0903">Direct protein sequencing</keyword>
<keyword id="KW-0967">Endosome</keyword>
<keyword id="KW-0325">Glycoprotein</keyword>
<keyword id="KW-0449">Lipoprotein</keyword>
<keyword id="KW-0458">Lysosome</keyword>
<keyword id="KW-0472">Membrane</keyword>
<keyword id="KW-0564">Palmitate</keyword>
<keyword id="KW-0653">Protein transport</keyword>
<keyword id="KW-1185">Reference proteome</keyword>
<keyword id="KW-0964">Secreted</keyword>
<keyword id="KW-0812">Transmembrane</keyword>
<keyword id="KW-1133">Transmembrane helix</keyword>
<keyword id="KW-0813">Transport</keyword>
<comment type="function">
    <text evidence="1">Functions as a cell surface receptor for TIMP1 and plays a role in the activation of cellular signaling cascades. Plays a role in the activation of ITGB1 and integrin signaling, leading to the activation of AKT, FAK/PTK2 and MAP kinases. Promotes cell survival, reorganization of the actin cytoskeleton, cell adhesion, spreading and migration, via its role in the activation of AKT and FAK/PTK2. Plays a role in VEGFA signaling via its role in regulating the internalization of KDR/VEGFR2. Plays a role in intracellular vesicular transport processes, and is required for normal trafficking of the PMEL luminal domain that is essential for the development and maturation of melanocytes. Plays a role in the adhesion of leukocytes onto endothelial cells via its role in the regulation of SELP trafficking. May play a role in mast cell degranulation in response to Ms4a2/FceRI stimulation, but not in mast cell degranulation in response to other stimuli (By similarity).</text>
</comment>
<comment type="subunit">
    <text evidence="1 3">Interacts with TIMP1 and ITGB1 and recruits TIMP1 to ITGB1. Interacts with CD9. Identified in a complex with CD9 and ITGB3. Interacts with PMEL. Interacts with KDR/VEGFR2; identified in a complex with ITGB1 and KDR/VEGFR2 and is required to recruit KDR to ITGB1 complexes. Interacts with SYT7 (By similarity).</text>
</comment>
<comment type="interaction">
    <interactant intactId="EBI-7784314">
        <id>P28648</id>
    </interactant>
    <interactant intactId="EBI-7784341">
        <id>Q03348</id>
        <label>Ptpra</label>
    </interactant>
    <organismsDiffer>false</organismsDiffer>
    <experiments>5</experiments>
</comment>
<comment type="interaction">
    <interactant intactId="EBI-7784314">
        <id>P28648</id>
    </interactant>
    <interactant intactId="EBI-7784541">
        <id>Q9WUD9</id>
        <label>Src</label>
    </interactant>
    <organismsDiffer>false</organismsDiffer>
    <experiments>2</experiments>
</comment>
<comment type="subcellular location">
    <subcellularLocation>
        <location evidence="5">Cell membrane</location>
        <topology evidence="4">Multi-pass membrane protein</topology>
    </subcellularLocation>
    <subcellularLocation>
        <location evidence="5">Lysosome membrane</location>
        <topology>Multi-pass membrane protein</topology>
    </subcellularLocation>
    <subcellularLocation>
        <location evidence="2">Late endosome membrane</location>
        <topology evidence="4">Multi-pass membrane protein</topology>
    </subcellularLocation>
    <subcellularLocation>
        <location evidence="2">Endosome</location>
        <location evidence="2">Multivesicular body</location>
    </subcellularLocation>
    <subcellularLocation>
        <location evidence="2">Melanosome</location>
    </subcellularLocation>
    <subcellularLocation>
        <location evidence="2">Secreted</location>
        <location evidence="2">Extracellular exosome</location>
    </subcellularLocation>
    <subcellularLocation>
        <location evidence="6">Cell surface</location>
    </subcellularLocation>
    <text evidence="2">Also found in Weibel-Palade bodies of endothelial cells. Located in platelet dense granules. Detected in a subset of pre-melanosomes. Detected on intralumenal vesicles (ILVs) within multivesicular bodies.</text>
</comment>
<comment type="tissue specificity">
    <text evidence="5">Detected in mast cells and platelets (at protein level).</text>
</comment>
<comment type="developmental stage">
    <text>Increased expression in embryonal tissues.</text>
</comment>
<comment type="PTM">
    <text evidence="1">Palmitoylated at a low, basal level in unstimulated platelets. The level of palmitoylation increases when platelets are activated by thrombin (in vitro) (By similarity).</text>
</comment>
<comment type="similarity">
    <text evidence="7">Belongs to the tetraspanin (TM4SF) family.</text>
</comment>
<dbReference type="EMBL" id="X61654">
    <property type="protein sequence ID" value="CAA43835.1"/>
    <property type="molecule type" value="mRNA"/>
</dbReference>
<dbReference type="EMBL" id="BC063173">
    <property type="protein sequence ID" value="AAH63173.1"/>
    <property type="molecule type" value="mRNA"/>
</dbReference>
<dbReference type="PIR" id="A46508">
    <property type="entry name" value="A46508"/>
</dbReference>
<dbReference type="RefSeq" id="NP_058821.1">
    <property type="nucleotide sequence ID" value="NM_017125.3"/>
</dbReference>
<dbReference type="RefSeq" id="XP_008763247.1">
    <property type="nucleotide sequence ID" value="XM_008765025.4"/>
</dbReference>
<dbReference type="SMR" id="P28648"/>
<dbReference type="FunCoup" id="P28648">
    <property type="interactions" value="557"/>
</dbReference>
<dbReference type="IntAct" id="P28648">
    <property type="interactions" value="2"/>
</dbReference>
<dbReference type="MINT" id="P28648"/>
<dbReference type="STRING" id="10116.ENSRNOP00000071571"/>
<dbReference type="GlyCosmos" id="P28648">
    <property type="glycosylation" value="3 sites, No reported glycans"/>
</dbReference>
<dbReference type="GlyGen" id="P28648">
    <property type="glycosylation" value="3 sites"/>
</dbReference>
<dbReference type="PhosphoSitePlus" id="P28648"/>
<dbReference type="SwissPalm" id="P28648"/>
<dbReference type="PaxDb" id="10116-ENSRNOP00000010180"/>
<dbReference type="Ensembl" id="ENSRNOT00000010180.6">
    <property type="protein sequence ID" value="ENSRNOP00000010180.4"/>
    <property type="gene ID" value="ENSRNOG00000007650.6"/>
</dbReference>
<dbReference type="GeneID" id="29186"/>
<dbReference type="KEGG" id="rno:29186"/>
<dbReference type="UCSC" id="RGD:62080">
    <property type="organism name" value="rat"/>
</dbReference>
<dbReference type="AGR" id="RGD:62080"/>
<dbReference type="CTD" id="967"/>
<dbReference type="RGD" id="62080">
    <property type="gene designation" value="Cd63"/>
</dbReference>
<dbReference type="eggNOG" id="KOG3882">
    <property type="taxonomic scope" value="Eukaryota"/>
</dbReference>
<dbReference type="GeneTree" id="ENSGT00940000156832"/>
<dbReference type="HOGENOM" id="CLU_055524_6_1_1"/>
<dbReference type="InParanoid" id="P28648"/>
<dbReference type="OrthoDB" id="65159at9989"/>
<dbReference type="PhylomeDB" id="P28648"/>
<dbReference type="Reactome" id="R-RNO-114608">
    <property type="pathway name" value="Platelet degranulation"/>
</dbReference>
<dbReference type="Reactome" id="R-RNO-6798695">
    <property type="pathway name" value="Neutrophil degranulation"/>
</dbReference>
<dbReference type="PRO" id="PR:P28648"/>
<dbReference type="Proteomes" id="UP000002494">
    <property type="component" value="Chromosome 7"/>
</dbReference>
<dbReference type="Bgee" id="ENSRNOG00000007650">
    <property type="expression patterns" value="Expressed in adult mammalian kidney and 19 other cell types or tissues"/>
</dbReference>
<dbReference type="ExpressionAtlas" id="P28648">
    <property type="expression patterns" value="baseline and differential"/>
</dbReference>
<dbReference type="GO" id="GO:0009986">
    <property type="term" value="C:cell surface"/>
    <property type="evidence" value="ECO:0000266"/>
    <property type="project" value="RGD"/>
</dbReference>
<dbReference type="GO" id="GO:0031904">
    <property type="term" value="C:endosome lumen"/>
    <property type="evidence" value="ECO:0000266"/>
    <property type="project" value="RGD"/>
</dbReference>
<dbReference type="GO" id="GO:0010008">
    <property type="term" value="C:endosome membrane"/>
    <property type="evidence" value="ECO:0000266"/>
    <property type="project" value="RGD"/>
</dbReference>
<dbReference type="GO" id="GO:0070062">
    <property type="term" value="C:extracellular exosome"/>
    <property type="evidence" value="ECO:0000314"/>
    <property type="project" value="BHF-UCL"/>
</dbReference>
<dbReference type="GO" id="GO:0005615">
    <property type="term" value="C:extracellular space"/>
    <property type="evidence" value="ECO:0000266"/>
    <property type="project" value="RGD"/>
</dbReference>
<dbReference type="GO" id="GO:0005770">
    <property type="term" value="C:late endosome"/>
    <property type="evidence" value="ECO:0000266"/>
    <property type="project" value="RGD"/>
</dbReference>
<dbReference type="GO" id="GO:0031902">
    <property type="term" value="C:late endosome membrane"/>
    <property type="evidence" value="ECO:0000250"/>
    <property type="project" value="UniProtKB"/>
</dbReference>
<dbReference type="GO" id="GO:0005765">
    <property type="term" value="C:lysosomal membrane"/>
    <property type="evidence" value="ECO:0000250"/>
    <property type="project" value="UniProtKB"/>
</dbReference>
<dbReference type="GO" id="GO:0005764">
    <property type="term" value="C:lysosome"/>
    <property type="evidence" value="ECO:0000266"/>
    <property type="project" value="RGD"/>
</dbReference>
<dbReference type="GO" id="GO:0042470">
    <property type="term" value="C:melanosome"/>
    <property type="evidence" value="ECO:0007669"/>
    <property type="project" value="UniProtKB-SubCell"/>
</dbReference>
<dbReference type="GO" id="GO:0032585">
    <property type="term" value="C:multivesicular body membrane"/>
    <property type="evidence" value="ECO:0000250"/>
    <property type="project" value="UniProtKB"/>
</dbReference>
<dbReference type="GO" id="GO:0097487">
    <property type="term" value="C:multivesicular body, internal vesicle"/>
    <property type="evidence" value="ECO:0000250"/>
    <property type="project" value="UniProtKB"/>
</dbReference>
<dbReference type="GO" id="GO:0005654">
    <property type="term" value="C:nucleoplasm"/>
    <property type="evidence" value="ECO:0007669"/>
    <property type="project" value="Ensembl"/>
</dbReference>
<dbReference type="GO" id="GO:0005886">
    <property type="term" value="C:plasma membrane"/>
    <property type="evidence" value="ECO:0000250"/>
    <property type="project" value="UniProtKB"/>
</dbReference>
<dbReference type="GO" id="GO:0032991">
    <property type="term" value="C:protein-containing complex"/>
    <property type="evidence" value="ECO:0000314"/>
    <property type="project" value="RGD"/>
</dbReference>
<dbReference type="GO" id="GO:0044877">
    <property type="term" value="F:protein-containing complex binding"/>
    <property type="evidence" value="ECO:0000314"/>
    <property type="project" value="RGD"/>
</dbReference>
<dbReference type="GO" id="GO:0016477">
    <property type="term" value="P:cell migration"/>
    <property type="evidence" value="ECO:0000250"/>
    <property type="project" value="UniProtKB"/>
</dbReference>
<dbReference type="GO" id="GO:0007160">
    <property type="term" value="P:cell-matrix adhesion"/>
    <property type="evidence" value="ECO:0000250"/>
    <property type="project" value="UniProtKB"/>
</dbReference>
<dbReference type="GO" id="GO:0035646">
    <property type="term" value="P:endosome to melanosome transport"/>
    <property type="evidence" value="ECO:0000250"/>
    <property type="project" value="UniProtKB"/>
</dbReference>
<dbReference type="GO" id="GO:0030855">
    <property type="term" value="P:epithelial cell differentiation"/>
    <property type="evidence" value="ECO:0000315"/>
    <property type="project" value="RGD"/>
</dbReference>
<dbReference type="GO" id="GO:0010633">
    <property type="term" value="P:negative regulation of epithelial cell migration"/>
    <property type="evidence" value="ECO:0000315"/>
    <property type="project" value="RGD"/>
</dbReference>
<dbReference type="GO" id="GO:0050931">
    <property type="term" value="P:pigment cell differentiation"/>
    <property type="evidence" value="ECO:0000266"/>
    <property type="project" value="RGD"/>
</dbReference>
<dbReference type="GO" id="GO:0048757">
    <property type="term" value="P:pigment granule maturation"/>
    <property type="evidence" value="ECO:0000250"/>
    <property type="project" value="UniProtKB"/>
</dbReference>
<dbReference type="GO" id="GO:0043473">
    <property type="term" value="P:pigmentation"/>
    <property type="evidence" value="ECO:0000266"/>
    <property type="project" value="RGD"/>
</dbReference>
<dbReference type="GO" id="GO:0045785">
    <property type="term" value="P:positive regulation of cell adhesion"/>
    <property type="evidence" value="ECO:0000315"/>
    <property type="project" value="RGD"/>
</dbReference>
<dbReference type="GO" id="GO:0045807">
    <property type="term" value="P:positive regulation of endocytosis"/>
    <property type="evidence" value="ECO:0000315"/>
    <property type="project" value="RGD"/>
</dbReference>
<dbReference type="GO" id="GO:2001046">
    <property type="term" value="P:positive regulation of integrin-mediated signaling pathway"/>
    <property type="evidence" value="ECO:0000250"/>
    <property type="project" value="UniProtKB"/>
</dbReference>
<dbReference type="GO" id="GO:0002092">
    <property type="term" value="P:positive regulation of receptor internalization"/>
    <property type="evidence" value="ECO:0000250"/>
    <property type="project" value="UniProtKB"/>
</dbReference>
<dbReference type="GO" id="GO:0015031">
    <property type="term" value="P:protein transport"/>
    <property type="evidence" value="ECO:0007669"/>
    <property type="project" value="UniProtKB-KW"/>
</dbReference>
<dbReference type="GO" id="GO:1901379">
    <property type="term" value="P:regulation of potassium ion transmembrane transport"/>
    <property type="evidence" value="ECO:0000266"/>
    <property type="project" value="RGD"/>
</dbReference>
<dbReference type="GO" id="GO:1900746">
    <property type="term" value="P:regulation of vascular endothelial growth factor signaling pathway"/>
    <property type="evidence" value="ECO:0000250"/>
    <property type="project" value="UniProtKB"/>
</dbReference>
<dbReference type="CDD" id="cd03166">
    <property type="entry name" value="CD63_LEL"/>
    <property type="match status" value="1"/>
</dbReference>
<dbReference type="FunFam" id="1.10.1450.10:FF:000019">
    <property type="entry name" value="Tetraspanin"/>
    <property type="match status" value="1"/>
</dbReference>
<dbReference type="Gene3D" id="1.10.1450.10">
    <property type="entry name" value="Tetraspanin"/>
    <property type="match status" value="1"/>
</dbReference>
<dbReference type="InterPro" id="IPR042028">
    <property type="entry name" value="CD63_LEL"/>
</dbReference>
<dbReference type="InterPro" id="IPR018499">
    <property type="entry name" value="Tetraspanin/Peripherin"/>
</dbReference>
<dbReference type="InterPro" id="IPR000301">
    <property type="entry name" value="Tetraspanin_animals"/>
</dbReference>
<dbReference type="InterPro" id="IPR018503">
    <property type="entry name" value="Tetraspanin_CS"/>
</dbReference>
<dbReference type="InterPro" id="IPR008952">
    <property type="entry name" value="Tetraspanin_EC2_sf"/>
</dbReference>
<dbReference type="PANTHER" id="PTHR19282:SF471">
    <property type="entry name" value="CD63 ANTIGEN"/>
    <property type="match status" value="1"/>
</dbReference>
<dbReference type="PANTHER" id="PTHR19282">
    <property type="entry name" value="TETRASPANIN"/>
    <property type="match status" value="1"/>
</dbReference>
<dbReference type="Pfam" id="PF00335">
    <property type="entry name" value="Tetraspanin"/>
    <property type="match status" value="1"/>
</dbReference>
<dbReference type="PIRSF" id="PIRSF002419">
    <property type="entry name" value="Tetraspanin"/>
    <property type="match status" value="1"/>
</dbReference>
<dbReference type="PRINTS" id="PR00259">
    <property type="entry name" value="TMFOUR"/>
</dbReference>
<dbReference type="SUPFAM" id="SSF48652">
    <property type="entry name" value="Tetraspanin"/>
    <property type="match status" value="1"/>
</dbReference>
<dbReference type="PROSITE" id="PS00421">
    <property type="entry name" value="TM4_1"/>
    <property type="match status" value="1"/>
</dbReference>